<keyword id="KW-0028">Amino-acid biosynthesis</keyword>
<keyword id="KW-0057">Aromatic amino acid biosynthesis</keyword>
<keyword id="KW-0328">Glycosyltransferase</keyword>
<keyword id="KW-0460">Magnesium</keyword>
<keyword id="KW-0479">Metal-binding</keyword>
<keyword id="KW-0808">Transferase</keyword>
<keyword id="KW-0822">Tryptophan biosynthesis</keyword>
<gene>
    <name evidence="1" type="primary">trpD</name>
    <name type="ordered locus">LACR_1558</name>
</gene>
<accession>Q02YA8</accession>
<evidence type="ECO:0000255" key="1">
    <source>
        <dbReference type="HAMAP-Rule" id="MF_00211"/>
    </source>
</evidence>
<protein>
    <recommendedName>
        <fullName evidence="1">Anthranilate phosphoribosyltransferase</fullName>
        <ecNumber evidence="1">2.4.2.18</ecNumber>
    </recommendedName>
</protein>
<organism>
    <name type="scientific">Lactococcus lactis subsp. cremoris (strain SK11)</name>
    <dbReference type="NCBI Taxonomy" id="272622"/>
    <lineage>
        <taxon>Bacteria</taxon>
        <taxon>Bacillati</taxon>
        <taxon>Bacillota</taxon>
        <taxon>Bacilli</taxon>
        <taxon>Lactobacillales</taxon>
        <taxon>Streptococcaceae</taxon>
        <taxon>Lactococcus</taxon>
        <taxon>Lactococcus cremoris subsp. cremoris</taxon>
    </lineage>
</organism>
<feature type="chain" id="PRO_1000043020" description="Anthranilate phosphoribosyltransferase">
    <location>
        <begin position="1"/>
        <end position="335"/>
    </location>
</feature>
<feature type="binding site" evidence="1">
    <location>
        <position position="79"/>
    </location>
    <ligand>
        <name>5-phospho-alpha-D-ribose 1-diphosphate</name>
        <dbReference type="ChEBI" id="CHEBI:58017"/>
    </ligand>
</feature>
<feature type="binding site" evidence="1">
    <location>
        <position position="79"/>
    </location>
    <ligand>
        <name>anthranilate</name>
        <dbReference type="ChEBI" id="CHEBI:16567"/>
        <label>1</label>
    </ligand>
</feature>
<feature type="binding site" evidence="1">
    <location>
        <begin position="82"/>
        <end position="83"/>
    </location>
    <ligand>
        <name>5-phospho-alpha-D-ribose 1-diphosphate</name>
        <dbReference type="ChEBI" id="CHEBI:58017"/>
    </ligand>
</feature>
<feature type="binding site" evidence="1">
    <location>
        <position position="87"/>
    </location>
    <ligand>
        <name>5-phospho-alpha-D-ribose 1-diphosphate</name>
        <dbReference type="ChEBI" id="CHEBI:58017"/>
    </ligand>
</feature>
<feature type="binding site" evidence="1">
    <location>
        <begin position="89"/>
        <end position="92"/>
    </location>
    <ligand>
        <name>5-phospho-alpha-D-ribose 1-diphosphate</name>
        <dbReference type="ChEBI" id="CHEBI:58017"/>
    </ligand>
</feature>
<feature type="binding site" evidence="1">
    <location>
        <position position="91"/>
    </location>
    <ligand>
        <name>Mg(2+)</name>
        <dbReference type="ChEBI" id="CHEBI:18420"/>
        <label>1</label>
    </ligand>
</feature>
<feature type="binding site" evidence="1">
    <location>
        <begin position="107"/>
        <end position="115"/>
    </location>
    <ligand>
        <name>5-phospho-alpha-D-ribose 1-diphosphate</name>
        <dbReference type="ChEBI" id="CHEBI:58017"/>
    </ligand>
</feature>
<feature type="binding site" evidence="1">
    <location>
        <position position="110"/>
    </location>
    <ligand>
        <name>anthranilate</name>
        <dbReference type="ChEBI" id="CHEBI:16567"/>
        <label>1</label>
    </ligand>
</feature>
<feature type="binding site" evidence="1">
    <location>
        <position position="119"/>
    </location>
    <ligand>
        <name>5-phospho-alpha-D-ribose 1-diphosphate</name>
        <dbReference type="ChEBI" id="CHEBI:58017"/>
    </ligand>
</feature>
<feature type="binding site" evidence="1">
    <location>
        <position position="165"/>
    </location>
    <ligand>
        <name>anthranilate</name>
        <dbReference type="ChEBI" id="CHEBI:16567"/>
        <label>2</label>
    </ligand>
</feature>
<feature type="binding site" evidence="1">
    <location>
        <position position="224"/>
    </location>
    <ligand>
        <name>Mg(2+)</name>
        <dbReference type="ChEBI" id="CHEBI:18420"/>
        <label>2</label>
    </ligand>
</feature>
<feature type="binding site" evidence="1">
    <location>
        <position position="225"/>
    </location>
    <ligand>
        <name>Mg(2+)</name>
        <dbReference type="ChEBI" id="CHEBI:18420"/>
        <label>1</label>
    </ligand>
</feature>
<feature type="binding site" evidence="1">
    <location>
        <position position="225"/>
    </location>
    <ligand>
        <name>Mg(2+)</name>
        <dbReference type="ChEBI" id="CHEBI:18420"/>
        <label>2</label>
    </ligand>
</feature>
<dbReference type="EC" id="2.4.2.18" evidence="1"/>
<dbReference type="EMBL" id="CP000425">
    <property type="protein sequence ID" value="ABJ73064.1"/>
    <property type="molecule type" value="Genomic_DNA"/>
</dbReference>
<dbReference type="RefSeq" id="WP_011676424.1">
    <property type="nucleotide sequence ID" value="NC_008527.1"/>
</dbReference>
<dbReference type="SMR" id="Q02YA8"/>
<dbReference type="KEGG" id="llc:LACR_1558"/>
<dbReference type="HOGENOM" id="CLU_034315_2_1_9"/>
<dbReference type="UniPathway" id="UPA00035">
    <property type="reaction ID" value="UER00041"/>
</dbReference>
<dbReference type="Proteomes" id="UP000000240">
    <property type="component" value="Chromosome"/>
</dbReference>
<dbReference type="GO" id="GO:0005829">
    <property type="term" value="C:cytosol"/>
    <property type="evidence" value="ECO:0007669"/>
    <property type="project" value="TreeGrafter"/>
</dbReference>
<dbReference type="GO" id="GO:0004048">
    <property type="term" value="F:anthranilate phosphoribosyltransferase activity"/>
    <property type="evidence" value="ECO:0007669"/>
    <property type="project" value="UniProtKB-UniRule"/>
</dbReference>
<dbReference type="GO" id="GO:0000287">
    <property type="term" value="F:magnesium ion binding"/>
    <property type="evidence" value="ECO:0007669"/>
    <property type="project" value="UniProtKB-UniRule"/>
</dbReference>
<dbReference type="GO" id="GO:0000162">
    <property type="term" value="P:L-tryptophan biosynthetic process"/>
    <property type="evidence" value="ECO:0007669"/>
    <property type="project" value="UniProtKB-UniRule"/>
</dbReference>
<dbReference type="FunFam" id="3.40.1030.10:FF:000002">
    <property type="entry name" value="Anthranilate phosphoribosyltransferase"/>
    <property type="match status" value="1"/>
</dbReference>
<dbReference type="Gene3D" id="3.40.1030.10">
    <property type="entry name" value="Nucleoside phosphorylase/phosphoribosyltransferase catalytic domain"/>
    <property type="match status" value="1"/>
</dbReference>
<dbReference type="Gene3D" id="1.20.970.10">
    <property type="entry name" value="Transferase, Pyrimidine Nucleoside Phosphorylase, Chain C"/>
    <property type="match status" value="1"/>
</dbReference>
<dbReference type="HAMAP" id="MF_00211">
    <property type="entry name" value="TrpD"/>
    <property type="match status" value="1"/>
</dbReference>
<dbReference type="InterPro" id="IPR005940">
    <property type="entry name" value="Anthranilate_Pribosyl_Tfrase"/>
</dbReference>
<dbReference type="InterPro" id="IPR000312">
    <property type="entry name" value="Glycosyl_Trfase_fam3"/>
</dbReference>
<dbReference type="InterPro" id="IPR017459">
    <property type="entry name" value="Glycosyl_Trfase_fam3_N_dom"/>
</dbReference>
<dbReference type="InterPro" id="IPR036320">
    <property type="entry name" value="Glycosyl_Trfase_fam3_N_dom_sf"/>
</dbReference>
<dbReference type="InterPro" id="IPR035902">
    <property type="entry name" value="Nuc_phospho_transferase"/>
</dbReference>
<dbReference type="NCBIfam" id="TIGR01245">
    <property type="entry name" value="trpD"/>
    <property type="match status" value="1"/>
</dbReference>
<dbReference type="PANTHER" id="PTHR43285">
    <property type="entry name" value="ANTHRANILATE PHOSPHORIBOSYLTRANSFERASE"/>
    <property type="match status" value="1"/>
</dbReference>
<dbReference type="PANTHER" id="PTHR43285:SF2">
    <property type="entry name" value="ANTHRANILATE PHOSPHORIBOSYLTRANSFERASE"/>
    <property type="match status" value="1"/>
</dbReference>
<dbReference type="Pfam" id="PF02885">
    <property type="entry name" value="Glycos_trans_3N"/>
    <property type="match status" value="1"/>
</dbReference>
<dbReference type="Pfam" id="PF00591">
    <property type="entry name" value="Glycos_transf_3"/>
    <property type="match status" value="1"/>
</dbReference>
<dbReference type="SUPFAM" id="SSF52418">
    <property type="entry name" value="Nucleoside phosphorylase/phosphoribosyltransferase catalytic domain"/>
    <property type="match status" value="1"/>
</dbReference>
<dbReference type="SUPFAM" id="SSF47648">
    <property type="entry name" value="Nucleoside phosphorylase/phosphoribosyltransferase N-terminal domain"/>
    <property type="match status" value="1"/>
</dbReference>
<proteinExistence type="inferred from homology"/>
<sequence>MKNELEKVMAGRDMTENEMNMLANSIIQGELSDVQIASFLVALKMKGESASELTGLARALQKAAISIPTNLTNAMDNCGTGGDRSFSFNISTTAAFVLAAGGVNMAKHGNRSITSKSGSADVLEALGINLYLPAEKLAQVFDKVGLVFLFAQNLHPAMKYFTPVRRQLEIPTIMNLTGPLINPIPLDTQLLGTSRPDLLELTANVLKGLGRKRALVITGEGGMDEATPFGLNHYALLENGEVTLHKFRAADVGMSEVALNDIRGGEAPENSEILKNVLENCSSAFLETTVLNAGLGFYANGKVDSIKSGIELAREVIAQGAALEKLHELQAEQIG</sequence>
<name>TRPD_LACLS</name>
<reference key="1">
    <citation type="journal article" date="2006" name="Proc. Natl. Acad. Sci. U.S.A.">
        <title>Comparative genomics of the lactic acid bacteria.</title>
        <authorList>
            <person name="Makarova K.S."/>
            <person name="Slesarev A."/>
            <person name="Wolf Y.I."/>
            <person name="Sorokin A."/>
            <person name="Mirkin B."/>
            <person name="Koonin E.V."/>
            <person name="Pavlov A."/>
            <person name="Pavlova N."/>
            <person name="Karamychev V."/>
            <person name="Polouchine N."/>
            <person name="Shakhova V."/>
            <person name="Grigoriev I."/>
            <person name="Lou Y."/>
            <person name="Rohksar D."/>
            <person name="Lucas S."/>
            <person name="Huang K."/>
            <person name="Goodstein D.M."/>
            <person name="Hawkins T."/>
            <person name="Plengvidhya V."/>
            <person name="Welker D."/>
            <person name="Hughes J."/>
            <person name="Goh Y."/>
            <person name="Benson A."/>
            <person name="Baldwin K."/>
            <person name="Lee J.-H."/>
            <person name="Diaz-Muniz I."/>
            <person name="Dosti B."/>
            <person name="Smeianov V."/>
            <person name="Wechter W."/>
            <person name="Barabote R."/>
            <person name="Lorca G."/>
            <person name="Altermann E."/>
            <person name="Barrangou R."/>
            <person name="Ganesan B."/>
            <person name="Xie Y."/>
            <person name="Rawsthorne H."/>
            <person name="Tamir D."/>
            <person name="Parker C."/>
            <person name="Breidt F."/>
            <person name="Broadbent J.R."/>
            <person name="Hutkins R."/>
            <person name="O'Sullivan D."/>
            <person name="Steele J."/>
            <person name="Unlu G."/>
            <person name="Saier M.H. Jr."/>
            <person name="Klaenhammer T."/>
            <person name="Richardson P."/>
            <person name="Kozyavkin S."/>
            <person name="Weimer B.C."/>
            <person name="Mills D.A."/>
        </authorList>
    </citation>
    <scope>NUCLEOTIDE SEQUENCE [LARGE SCALE GENOMIC DNA]</scope>
    <source>
        <strain>SK11</strain>
    </source>
</reference>
<comment type="function">
    <text evidence="1">Catalyzes the transfer of the phosphoribosyl group of 5-phosphorylribose-1-pyrophosphate (PRPP) to anthranilate to yield N-(5'-phosphoribosyl)-anthranilate (PRA).</text>
</comment>
<comment type="catalytic activity">
    <reaction evidence="1">
        <text>N-(5-phospho-beta-D-ribosyl)anthranilate + diphosphate = 5-phospho-alpha-D-ribose 1-diphosphate + anthranilate</text>
        <dbReference type="Rhea" id="RHEA:11768"/>
        <dbReference type="ChEBI" id="CHEBI:16567"/>
        <dbReference type="ChEBI" id="CHEBI:18277"/>
        <dbReference type="ChEBI" id="CHEBI:33019"/>
        <dbReference type="ChEBI" id="CHEBI:58017"/>
        <dbReference type="EC" id="2.4.2.18"/>
    </reaction>
</comment>
<comment type="cofactor">
    <cofactor evidence="1">
        <name>Mg(2+)</name>
        <dbReference type="ChEBI" id="CHEBI:18420"/>
    </cofactor>
    <text evidence="1">Binds 2 magnesium ions per monomer.</text>
</comment>
<comment type="pathway">
    <text evidence="1">Amino-acid biosynthesis; L-tryptophan biosynthesis; L-tryptophan from chorismate: step 2/5.</text>
</comment>
<comment type="subunit">
    <text evidence="1">Homodimer.</text>
</comment>
<comment type="similarity">
    <text evidence="1">Belongs to the anthranilate phosphoribosyltransferase family.</text>
</comment>